<comment type="subcellular location">
    <subcellularLocation>
        <location evidence="1">Cell membrane</location>
        <topology evidence="1">Multi-pass membrane protein</topology>
    </subcellularLocation>
</comment>
<comment type="similarity">
    <text evidence="1">Belongs to the UPF0756 family.</text>
</comment>
<accession>C3PAI4</accession>
<reference key="1">
    <citation type="submission" date="2009-04" db="EMBL/GenBank/DDBJ databases">
        <title>Genome sequence of Bacillus anthracis A0248.</title>
        <authorList>
            <person name="Dodson R.J."/>
            <person name="Munk A.C."/>
            <person name="Bruce D."/>
            <person name="Detter C."/>
            <person name="Tapia R."/>
            <person name="Sutton G."/>
            <person name="Sims D."/>
            <person name="Brettin T."/>
        </authorList>
    </citation>
    <scope>NUCLEOTIDE SEQUENCE [LARGE SCALE GENOMIC DNA]</scope>
    <source>
        <strain>A0248</strain>
    </source>
</reference>
<name>Y4851_BACAA</name>
<protein>
    <recommendedName>
        <fullName evidence="1">UPF0756 membrane protein BAA_4851</fullName>
    </recommendedName>
</protein>
<sequence>MISQSTLFLFILLIIGLIAKNQSLTVAIGVLFLLKFTFLGDKVFPYLQTKGINLGVTVITIAVLVPIATGEIGFKQLGEAAKSYYAWIALASGVAVALLAKGGVQLLTTDPHITTALVFGTIIAVALFNGVAVGPLIGAGIAYAVMSIIQMFK</sequence>
<feature type="chain" id="PRO_0000388819" description="UPF0756 membrane protein BAA_4851">
    <location>
        <begin position="1"/>
        <end position="153"/>
    </location>
</feature>
<feature type="transmembrane region" description="Helical" evidence="1">
    <location>
        <begin position="8"/>
        <end position="28"/>
    </location>
</feature>
<feature type="transmembrane region" description="Helical" evidence="1">
    <location>
        <begin position="54"/>
        <end position="74"/>
    </location>
</feature>
<feature type="transmembrane region" description="Helical" evidence="1">
    <location>
        <begin position="87"/>
        <end position="107"/>
    </location>
</feature>
<feature type="transmembrane region" description="Helical" evidence="1">
    <location>
        <begin position="117"/>
        <end position="137"/>
    </location>
</feature>
<gene>
    <name type="ordered locus">BAA_4851</name>
</gene>
<organism>
    <name type="scientific">Bacillus anthracis (strain A0248)</name>
    <dbReference type="NCBI Taxonomy" id="592021"/>
    <lineage>
        <taxon>Bacteria</taxon>
        <taxon>Bacillati</taxon>
        <taxon>Bacillota</taxon>
        <taxon>Bacilli</taxon>
        <taxon>Bacillales</taxon>
        <taxon>Bacillaceae</taxon>
        <taxon>Bacillus</taxon>
        <taxon>Bacillus cereus group</taxon>
    </lineage>
</organism>
<keyword id="KW-1003">Cell membrane</keyword>
<keyword id="KW-0472">Membrane</keyword>
<keyword id="KW-0812">Transmembrane</keyword>
<keyword id="KW-1133">Transmembrane helix</keyword>
<evidence type="ECO:0000255" key="1">
    <source>
        <dbReference type="HAMAP-Rule" id="MF_01874"/>
    </source>
</evidence>
<dbReference type="EMBL" id="CP001598">
    <property type="protein sequence ID" value="ACQ48311.1"/>
    <property type="molecule type" value="Genomic_DNA"/>
</dbReference>
<dbReference type="RefSeq" id="WP_000625507.1">
    <property type="nucleotide sequence ID" value="NC_012659.1"/>
</dbReference>
<dbReference type="KEGG" id="bai:BAA_4851"/>
<dbReference type="HOGENOM" id="CLU_125889_1_0_9"/>
<dbReference type="GO" id="GO:0005886">
    <property type="term" value="C:plasma membrane"/>
    <property type="evidence" value="ECO:0007669"/>
    <property type="project" value="UniProtKB-SubCell"/>
</dbReference>
<dbReference type="HAMAP" id="MF_01874">
    <property type="entry name" value="UPF0756"/>
    <property type="match status" value="1"/>
</dbReference>
<dbReference type="InterPro" id="IPR007382">
    <property type="entry name" value="UPF0756_TM"/>
</dbReference>
<dbReference type="PANTHER" id="PTHR38452">
    <property type="entry name" value="UPF0756 MEMBRANE PROTEIN YEAL"/>
    <property type="match status" value="1"/>
</dbReference>
<dbReference type="PANTHER" id="PTHR38452:SF1">
    <property type="entry name" value="UPF0756 MEMBRANE PROTEIN YEAL"/>
    <property type="match status" value="1"/>
</dbReference>
<dbReference type="Pfam" id="PF04284">
    <property type="entry name" value="DUF441"/>
    <property type="match status" value="1"/>
</dbReference>
<proteinExistence type="inferred from homology"/>